<name>LEU3_ZYGBA</name>
<feature type="chain" id="PRO_0000083624" description="3-isopropylmalate dehydrogenase">
    <location>
        <begin position="1"/>
        <end position="362"/>
    </location>
</feature>
<feature type="binding site" evidence="1">
    <location>
        <begin position="77"/>
        <end position="88"/>
    </location>
    <ligand>
        <name>NAD(+)</name>
        <dbReference type="ChEBI" id="CHEBI:57540"/>
    </ligand>
</feature>
<feature type="binding site" evidence="1">
    <location>
        <position position="95"/>
    </location>
    <ligand>
        <name>substrate</name>
    </ligand>
</feature>
<feature type="binding site" evidence="1">
    <location>
        <position position="105"/>
    </location>
    <ligand>
        <name>substrate</name>
    </ligand>
</feature>
<feature type="binding site" evidence="1">
    <location>
        <position position="134"/>
    </location>
    <ligand>
        <name>substrate</name>
    </ligand>
</feature>
<feature type="binding site" evidence="1">
    <location>
        <position position="223"/>
    </location>
    <ligand>
        <name>Mg(2+)</name>
        <dbReference type="ChEBI" id="CHEBI:18420"/>
    </ligand>
</feature>
<feature type="binding site" evidence="1">
    <location>
        <position position="223"/>
    </location>
    <ligand>
        <name>substrate</name>
    </ligand>
</feature>
<feature type="binding site" evidence="1">
    <location>
        <position position="248"/>
    </location>
    <ligand>
        <name>Mg(2+)</name>
        <dbReference type="ChEBI" id="CHEBI:18420"/>
    </ligand>
</feature>
<feature type="binding site" evidence="1">
    <location>
        <position position="252"/>
    </location>
    <ligand>
        <name>Mg(2+)</name>
        <dbReference type="ChEBI" id="CHEBI:18420"/>
    </ligand>
</feature>
<feature type="binding site" evidence="1">
    <location>
        <begin position="287"/>
        <end position="298"/>
    </location>
    <ligand>
        <name>NAD(+)</name>
        <dbReference type="ChEBI" id="CHEBI:57540"/>
    </ligand>
</feature>
<feature type="site" description="Important for catalysis" evidence="1">
    <location>
        <position position="141"/>
    </location>
</feature>
<feature type="site" description="Important for catalysis" evidence="1">
    <location>
        <position position="190"/>
    </location>
</feature>
<comment type="function">
    <text>Catalyzes the oxidation of 3-carboxy-2-hydroxy-4-methylpentanoate (3-isopropylmalate) to 3-carboxy-4-methyl-2-oxopentanoate. The product decarboxylates to 4-methyl-2 oxopentanoate.</text>
</comment>
<comment type="catalytic activity">
    <reaction>
        <text>(2R,3S)-3-isopropylmalate + NAD(+) = 4-methyl-2-oxopentanoate + CO2 + NADH</text>
        <dbReference type="Rhea" id="RHEA:32271"/>
        <dbReference type="ChEBI" id="CHEBI:16526"/>
        <dbReference type="ChEBI" id="CHEBI:17865"/>
        <dbReference type="ChEBI" id="CHEBI:35121"/>
        <dbReference type="ChEBI" id="CHEBI:57540"/>
        <dbReference type="ChEBI" id="CHEBI:57945"/>
        <dbReference type="EC" id="1.1.1.85"/>
    </reaction>
</comment>
<comment type="cofactor">
    <cofactor evidence="1">
        <name>Mg(2+)</name>
        <dbReference type="ChEBI" id="CHEBI:18420"/>
    </cofactor>
    <cofactor evidence="1">
        <name>Mn(2+)</name>
        <dbReference type="ChEBI" id="CHEBI:29035"/>
    </cofactor>
    <text evidence="1">Binds 1 Mg(2+) or Mn(2+) ion per subunit.</text>
</comment>
<comment type="pathway">
    <text>Amino-acid biosynthesis; L-leucine biosynthesis; L-leucine from 3-methyl-2-oxobutanoate: step 3/4.</text>
</comment>
<comment type="subunit">
    <text evidence="1">Homodimer.</text>
</comment>
<comment type="subcellular location">
    <subcellularLocation>
        <location>Cytoplasm</location>
    </subcellularLocation>
</comment>
<comment type="similarity">
    <text evidence="2">Belongs to the isocitrate and isopropylmalate dehydrogenases family.</text>
</comment>
<organism>
    <name type="scientific">Zygosaccharomyces bailii</name>
    <dbReference type="NCBI Taxonomy" id="4954"/>
    <lineage>
        <taxon>Eukaryota</taxon>
        <taxon>Fungi</taxon>
        <taxon>Dikarya</taxon>
        <taxon>Ascomycota</taxon>
        <taxon>Saccharomycotina</taxon>
        <taxon>Saccharomycetes</taxon>
        <taxon>Saccharomycetales</taxon>
        <taxon>Saccharomycetaceae</taxon>
        <taxon>Zygosaccharomyces</taxon>
    </lineage>
</organism>
<keyword id="KW-0028">Amino-acid biosynthesis</keyword>
<keyword id="KW-0100">Branched-chain amino acid biosynthesis</keyword>
<keyword id="KW-0963">Cytoplasm</keyword>
<keyword id="KW-0432">Leucine biosynthesis</keyword>
<keyword id="KW-0460">Magnesium</keyword>
<keyword id="KW-0464">Manganese</keyword>
<keyword id="KW-0479">Metal-binding</keyword>
<keyword id="KW-0520">NAD</keyword>
<keyword id="KW-0560">Oxidoreductase</keyword>
<evidence type="ECO:0000250" key="1"/>
<evidence type="ECO:0000305" key="2"/>
<reference key="1">
    <citation type="journal article" date="2001" name="FEMS Yeast Res.">
        <title>Construction of a genomic library of the food spoilage yeast Zygosaccharomyces bailii and isolation of the beta-isopropylmalate dehydrogenase gene (ZbLEU2).</title>
        <authorList>
            <person name="Rodrigues F."/>
            <person name="Zeeman A.-M."/>
            <person name="Alves C."/>
            <person name="Sousa M.J."/>
            <person name="Steensma H.Y."/>
            <person name="Corte-Real M."/>
            <person name="Leao C."/>
        </authorList>
    </citation>
    <scope>NUCLEOTIDE SEQUENCE [GENOMIC DNA]</scope>
    <source>
        <strain>ISA 1307</strain>
    </source>
</reference>
<dbReference type="EC" id="1.1.1.85"/>
<dbReference type="EMBL" id="AJ292544">
    <property type="protein sequence ID" value="CAB99456.1"/>
    <property type="molecule type" value="Genomic_DNA"/>
</dbReference>
<dbReference type="SMR" id="Q9P3Y0"/>
<dbReference type="UniPathway" id="UPA00048">
    <property type="reaction ID" value="UER00072"/>
</dbReference>
<dbReference type="GO" id="GO:0005829">
    <property type="term" value="C:cytosol"/>
    <property type="evidence" value="ECO:0007669"/>
    <property type="project" value="TreeGrafter"/>
</dbReference>
<dbReference type="GO" id="GO:0003862">
    <property type="term" value="F:3-isopropylmalate dehydrogenase activity"/>
    <property type="evidence" value="ECO:0007669"/>
    <property type="project" value="UniProtKB-EC"/>
</dbReference>
<dbReference type="GO" id="GO:0000287">
    <property type="term" value="F:magnesium ion binding"/>
    <property type="evidence" value="ECO:0007669"/>
    <property type="project" value="InterPro"/>
</dbReference>
<dbReference type="GO" id="GO:0051287">
    <property type="term" value="F:NAD binding"/>
    <property type="evidence" value="ECO:0007669"/>
    <property type="project" value="InterPro"/>
</dbReference>
<dbReference type="GO" id="GO:0009098">
    <property type="term" value="P:L-leucine biosynthetic process"/>
    <property type="evidence" value="ECO:0007669"/>
    <property type="project" value="UniProtKB-UniPathway"/>
</dbReference>
<dbReference type="FunFam" id="3.40.718.10:FF:000006">
    <property type="entry name" value="3-isopropylmalate dehydrogenase"/>
    <property type="match status" value="1"/>
</dbReference>
<dbReference type="Gene3D" id="3.40.718.10">
    <property type="entry name" value="Isopropylmalate Dehydrogenase"/>
    <property type="match status" value="1"/>
</dbReference>
<dbReference type="InterPro" id="IPR019818">
    <property type="entry name" value="IsoCit/isopropylmalate_DH_CS"/>
</dbReference>
<dbReference type="InterPro" id="IPR024084">
    <property type="entry name" value="IsoPropMal-DH-like_dom"/>
</dbReference>
<dbReference type="InterPro" id="IPR004429">
    <property type="entry name" value="Isopropylmalate_DH"/>
</dbReference>
<dbReference type="NCBIfam" id="TIGR00169">
    <property type="entry name" value="leuB"/>
    <property type="match status" value="1"/>
</dbReference>
<dbReference type="PANTHER" id="PTHR42979">
    <property type="entry name" value="3-ISOPROPYLMALATE DEHYDROGENASE"/>
    <property type="match status" value="1"/>
</dbReference>
<dbReference type="PANTHER" id="PTHR42979:SF1">
    <property type="entry name" value="3-ISOPROPYLMALATE DEHYDROGENASE"/>
    <property type="match status" value="1"/>
</dbReference>
<dbReference type="Pfam" id="PF00180">
    <property type="entry name" value="Iso_dh"/>
    <property type="match status" value="1"/>
</dbReference>
<dbReference type="SMART" id="SM01329">
    <property type="entry name" value="Iso_dh"/>
    <property type="match status" value="1"/>
</dbReference>
<dbReference type="SUPFAM" id="SSF53659">
    <property type="entry name" value="Isocitrate/Isopropylmalate dehydrogenase-like"/>
    <property type="match status" value="1"/>
</dbReference>
<dbReference type="PROSITE" id="PS00470">
    <property type="entry name" value="IDH_IMDH"/>
    <property type="match status" value="1"/>
</dbReference>
<protein>
    <recommendedName>
        <fullName>3-isopropylmalate dehydrogenase</fullName>
        <shortName>3-IPM-DH</shortName>
        <shortName>IMDH</shortName>
        <ecNumber>1.1.1.85</ecNumber>
    </recommendedName>
    <alternativeName>
        <fullName>Beta-IPM dehydrogenase</fullName>
    </alternativeName>
</protein>
<sequence length="362" mass="38717">MSKNIVVLPGDHVGQEIAQEAIKVLEAISEVSPKAKFNFQHHLIGGSAIDATGSPLPDEALAAAKKADAVLLGAVGGPKWGTGAVRPEQGLLKIRKELQLYANLRPCNFASESLLELSPLKPQHARGTDFIVVRELVGGIYFGQRKEDDGDGVAWDSERYTKPEVQRITRMAAFLALQHNPPLPIWSLDKANVLASSRLWRKTVEETIKNEFPQLTVKHQLIDSAAMILIKNPTQLNGIIITSNMFEDIISDEASVIPGSLGLLPSASLASLPDTNEAFGLYEPCHGSAPDLPKGKVNPVAMILSAAMMLKLSLNMAKEGEALETAVKQVLDSGVRTGDLGGSNSTSEVGDAIAKAVKQILA</sequence>
<accession>Q9P3Y0</accession>
<proteinExistence type="inferred from homology"/>
<gene>
    <name type="primary">LEU2</name>
</gene>